<dbReference type="EMBL" id="DS480381">
    <property type="protein sequence ID" value="EDO19200.1"/>
    <property type="molecule type" value="Genomic_DNA"/>
</dbReference>
<dbReference type="RefSeq" id="XP_001647058.1">
    <property type="nucleotide sequence ID" value="XM_001647008.1"/>
</dbReference>
<dbReference type="FunCoup" id="A7TEV4">
    <property type="interactions" value="26"/>
</dbReference>
<dbReference type="STRING" id="436907.A7TEV4"/>
<dbReference type="GlyCosmos" id="A7TEV4">
    <property type="glycosylation" value="13 sites, No reported glycans"/>
</dbReference>
<dbReference type="GeneID" id="5547533"/>
<dbReference type="KEGG" id="vpo:Kpol_1050p58"/>
<dbReference type="eggNOG" id="ENOG502QVFP">
    <property type="taxonomic scope" value="Eukaryota"/>
</dbReference>
<dbReference type="HOGENOM" id="CLU_033723_0_0_1"/>
<dbReference type="InParanoid" id="A7TEV4"/>
<dbReference type="OMA" id="WGTIDPQ"/>
<dbReference type="OrthoDB" id="5573651at2759"/>
<dbReference type="PhylomeDB" id="A7TEV4"/>
<dbReference type="Proteomes" id="UP000000267">
    <property type="component" value="Unassembled WGS sequence"/>
</dbReference>
<dbReference type="GO" id="GO:0005789">
    <property type="term" value="C:endoplasmic reticulum membrane"/>
    <property type="evidence" value="ECO:0007669"/>
    <property type="project" value="EnsemblFungi"/>
</dbReference>
<dbReference type="GO" id="GO:0071464">
    <property type="term" value="P:cellular response to hydrostatic pressure"/>
    <property type="evidence" value="ECO:0007669"/>
    <property type="project" value="EnsemblFungi"/>
</dbReference>
<dbReference type="InterPro" id="IPR051008">
    <property type="entry name" value="Telomere_Capping_Maintenance"/>
</dbReference>
<dbReference type="PANTHER" id="PTHR35518:SF2">
    <property type="entry name" value="MAINTENANCE OF TELOMERE CAPPING PROTEIN 6"/>
    <property type="match status" value="1"/>
</dbReference>
<dbReference type="PANTHER" id="PTHR35518">
    <property type="entry name" value="MAINTENANCE OF TELOMOERE CAPPING"/>
    <property type="match status" value="1"/>
</dbReference>
<dbReference type="Pfam" id="PF25506">
    <property type="entry name" value="TIM-barrel_MTC6"/>
    <property type="match status" value="1"/>
</dbReference>
<organism>
    <name type="scientific">Vanderwaltozyma polyspora (strain ATCC 22028 / DSM 70294 / BCRC 21397 / CBS 2163 / NBRC 10782 / NRRL Y-8283 / UCD 57-17)</name>
    <name type="common">Kluyveromyces polysporus</name>
    <dbReference type="NCBI Taxonomy" id="436907"/>
    <lineage>
        <taxon>Eukaryota</taxon>
        <taxon>Fungi</taxon>
        <taxon>Dikarya</taxon>
        <taxon>Ascomycota</taxon>
        <taxon>Saccharomycotina</taxon>
        <taxon>Saccharomycetes</taxon>
        <taxon>Saccharomycetales</taxon>
        <taxon>Saccharomycetaceae</taxon>
        <taxon>Vanderwaltozyma</taxon>
    </lineage>
</organism>
<feature type="signal peptide" evidence="2">
    <location>
        <begin position="1"/>
        <end position="23"/>
    </location>
</feature>
<feature type="chain" id="PRO_0000407783" description="Maintenance of telomere capping protein 6">
    <location>
        <begin position="24"/>
        <end position="532"/>
    </location>
</feature>
<feature type="topological domain" description="Extracellular" evidence="2">
    <location>
        <begin position="24"/>
        <end position="487"/>
    </location>
</feature>
<feature type="transmembrane region" description="Helical" evidence="2">
    <location>
        <begin position="488"/>
        <end position="508"/>
    </location>
</feature>
<feature type="topological domain" description="Cytoplasmic" evidence="2">
    <location>
        <begin position="509"/>
        <end position="532"/>
    </location>
</feature>
<feature type="glycosylation site" description="N-linked (GlcNAc...) asparagine" evidence="2">
    <location>
        <position position="26"/>
    </location>
</feature>
<feature type="glycosylation site" description="N-linked (GlcNAc...) asparagine" evidence="2">
    <location>
        <position position="114"/>
    </location>
</feature>
<feature type="glycosylation site" description="N-linked (GlcNAc...) asparagine" evidence="2">
    <location>
        <position position="151"/>
    </location>
</feature>
<feature type="glycosylation site" description="N-linked (GlcNAc...) asparagine" evidence="2">
    <location>
        <position position="163"/>
    </location>
</feature>
<feature type="glycosylation site" description="N-linked (GlcNAc...) asparagine" evidence="2">
    <location>
        <position position="169"/>
    </location>
</feature>
<feature type="glycosylation site" description="N-linked (GlcNAc...) asparagine" evidence="2">
    <location>
        <position position="211"/>
    </location>
</feature>
<feature type="glycosylation site" description="N-linked (GlcNAc...) asparagine" evidence="2">
    <location>
        <position position="253"/>
    </location>
</feature>
<feature type="glycosylation site" description="N-linked (GlcNAc...) asparagine" evidence="2">
    <location>
        <position position="260"/>
    </location>
</feature>
<feature type="glycosylation site" description="N-linked (GlcNAc...) asparagine" evidence="2">
    <location>
        <position position="322"/>
    </location>
</feature>
<feature type="glycosylation site" description="N-linked (GlcNAc...) asparagine" evidence="2">
    <location>
        <position position="328"/>
    </location>
</feature>
<feature type="glycosylation site" description="N-linked (GlcNAc...) asparagine" evidence="2">
    <location>
        <position position="368"/>
    </location>
</feature>
<feature type="glycosylation site" description="N-linked (GlcNAc...) asparagine" evidence="2">
    <location>
        <position position="441"/>
    </location>
</feature>
<feature type="glycosylation site" description="N-linked (GlcNAc...) asparagine" evidence="2">
    <location>
        <position position="479"/>
    </location>
</feature>
<accession>A7TEV4</accession>
<proteinExistence type="inferred from homology"/>
<comment type="function">
    <text evidence="1">May be involved in telomere capping.</text>
</comment>
<comment type="subcellular location">
    <subcellularLocation>
        <location evidence="3">Membrane</location>
        <topology evidence="3">Single-pass type I membrane protein</topology>
    </subcellularLocation>
</comment>
<comment type="similarity">
    <text evidence="3">Belongs to the MTC6 family.</text>
</comment>
<sequence>MIVMQLQQQLLIWVIFWLNYATALTNFTWSSDSPSMVYALRAQRDVMSSATIDQLPLVGVDVGRVFINGMVIENKDEDEEDEDLLVMLESLLEAGVQALSVDVEYKDEIWVVGNSTIAFDDFLLTVRDFLDGTNTDLSANILMVMLRIQPNSSDYGSPSTFNNYTHGYNYSDISDYNKDDIGDASDIEALIYSNIGRSYIYSPEDLVDDRNKSYTSDIYGLNSVNGWPTLSHFLYQKRKRVLFTELTTEMPYNTSSLLFNKTILHLDGGNIAISCPTSNSELTELSLVAWRFIENEFTDDSVRSYVDCGYSPIIANKYNQNNITHLLNLTQSALLWSWEVGQPSTNEKKNSDTLEAYNCVSFVYTANNYSAYWKVENCYDEKKGLCEAKTDLFSYIVSENVDSYFNFDSFDGSNCPDGFDFSIPKTPLEQLAVINYLRLRNSSDTEIWIDLNSISVNNCWVTGGPYATCPYETVMSRRNFTKMITPASITSFGLLVLVTCLNLLSLPIHDNRSNWRRMINKLSRNEFDGVPA</sequence>
<name>MTC6_VANPO</name>
<gene>
    <name type="primary">MTC6</name>
    <name type="ORF">Kpol_1050p58</name>
</gene>
<protein>
    <recommendedName>
        <fullName>Maintenance of telomere capping protein 6</fullName>
    </recommendedName>
</protein>
<reference key="1">
    <citation type="journal article" date="2007" name="Proc. Natl. Acad. Sci. U.S.A.">
        <title>Independent sorting-out of thousands of duplicated gene pairs in two yeast species descended from a whole-genome duplication.</title>
        <authorList>
            <person name="Scannell D.R."/>
            <person name="Frank A.C."/>
            <person name="Conant G.C."/>
            <person name="Byrne K.P."/>
            <person name="Woolfit M."/>
            <person name="Wolfe K.H."/>
        </authorList>
    </citation>
    <scope>NUCLEOTIDE SEQUENCE [LARGE SCALE GENOMIC DNA]</scope>
    <source>
        <strain>ATCC 22028 / DSM 70294 / BCRC 21397 / CBS 2163 / NBRC 10782 / NRRL Y-8283 / UCD 57-17</strain>
    </source>
</reference>
<evidence type="ECO:0000250" key="1"/>
<evidence type="ECO:0000255" key="2"/>
<evidence type="ECO:0000305" key="3"/>
<keyword id="KW-0325">Glycoprotein</keyword>
<keyword id="KW-0472">Membrane</keyword>
<keyword id="KW-1185">Reference proteome</keyword>
<keyword id="KW-0732">Signal</keyword>
<keyword id="KW-0812">Transmembrane</keyword>
<keyword id="KW-1133">Transmembrane helix</keyword>